<organism>
    <name type="scientific">Mus musculus</name>
    <name type="common">Mouse</name>
    <dbReference type="NCBI Taxonomy" id="10090"/>
    <lineage>
        <taxon>Eukaryota</taxon>
        <taxon>Metazoa</taxon>
        <taxon>Chordata</taxon>
        <taxon>Craniata</taxon>
        <taxon>Vertebrata</taxon>
        <taxon>Euteleostomi</taxon>
        <taxon>Mammalia</taxon>
        <taxon>Eutheria</taxon>
        <taxon>Euarchontoglires</taxon>
        <taxon>Glires</taxon>
        <taxon>Rodentia</taxon>
        <taxon>Myomorpha</taxon>
        <taxon>Muroidea</taxon>
        <taxon>Muridae</taxon>
        <taxon>Murinae</taxon>
        <taxon>Mus</taxon>
        <taxon>Mus</taxon>
    </lineage>
</organism>
<dbReference type="EMBL" id="AF067395">
    <property type="protein sequence ID" value="AAD03588.1"/>
    <property type="molecule type" value="mRNA"/>
</dbReference>
<dbReference type="EMBL" id="AK004667">
    <property type="protein sequence ID" value="BAB23456.1"/>
    <property type="molecule type" value="mRNA"/>
</dbReference>
<dbReference type="EMBL" id="AK007920">
    <property type="protein sequence ID" value="BAB25351.1"/>
    <property type="molecule type" value="mRNA"/>
</dbReference>
<dbReference type="EMBL" id="AK013467">
    <property type="protein sequence ID" value="BAB28869.1"/>
    <property type="molecule type" value="mRNA"/>
</dbReference>
<dbReference type="EMBL" id="AK018668">
    <property type="protein sequence ID" value="BAB31334.1"/>
    <property type="molecule type" value="mRNA"/>
</dbReference>
<dbReference type="EMBL" id="AK139950">
    <property type="protein sequence ID" value="BAE24194.1"/>
    <property type="molecule type" value="mRNA"/>
</dbReference>
<dbReference type="EMBL" id="AK155040">
    <property type="protein sequence ID" value="BAE33007.1"/>
    <property type="molecule type" value="mRNA"/>
</dbReference>
<dbReference type="EMBL" id="BC085237">
    <property type="protein sequence ID" value="AAH85237.1"/>
    <property type="molecule type" value="mRNA"/>
</dbReference>
<dbReference type="CCDS" id="CCDS27227.1"/>
<dbReference type="RefSeq" id="NP_033891.1">
    <property type="nucleotide sequence ID" value="NM_009761.4"/>
</dbReference>
<dbReference type="SMR" id="Q9Z2F7"/>
<dbReference type="BioGRID" id="198378">
    <property type="interactions" value="5"/>
</dbReference>
<dbReference type="FunCoup" id="Q9Z2F7">
    <property type="interactions" value="4224"/>
</dbReference>
<dbReference type="IntAct" id="Q9Z2F7">
    <property type="interactions" value="7"/>
</dbReference>
<dbReference type="MINT" id="Q9Z2F7"/>
<dbReference type="STRING" id="10090.ENSMUSP00000022634"/>
<dbReference type="iPTMnet" id="Q9Z2F7"/>
<dbReference type="PhosphoSitePlus" id="Q9Z2F7"/>
<dbReference type="SwissPalm" id="Q9Z2F7"/>
<dbReference type="jPOST" id="Q9Z2F7"/>
<dbReference type="PaxDb" id="10090-ENSMUSP00000022634"/>
<dbReference type="ProteomicsDB" id="273751"/>
<dbReference type="Pumba" id="Q9Z2F7"/>
<dbReference type="Antibodypedia" id="2292">
    <property type="antibodies" value="465 antibodies from 42 providers"/>
</dbReference>
<dbReference type="DNASU" id="12177"/>
<dbReference type="Ensembl" id="ENSMUST00000022634.9">
    <property type="protein sequence ID" value="ENSMUSP00000022634.9"/>
    <property type="gene ID" value="ENSMUSG00000022051.16"/>
</dbReference>
<dbReference type="GeneID" id="12177"/>
<dbReference type="KEGG" id="mmu:12177"/>
<dbReference type="UCSC" id="uc007uks.2">
    <property type="organism name" value="mouse"/>
</dbReference>
<dbReference type="AGR" id="MGI:1332659"/>
<dbReference type="CTD" id="665"/>
<dbReference type="MGI" id="MGI:1332659">
    <property type="gene designation" value="Bnip3l"/>
</dbReference>
<dbReference type="VEuPathDB" id="HostDB:ENSMUSG00000022051"/>
<dbReference type="eggNOG" id="ENOG502R8Q5">
    <property type="taxonomic scope" value="Eukaryota"/>
</dbReference>
<dbReference type="GeneTree" id="ENSGT00390000013415"/>
<dbReference type="HOGENOM" id="CLU_091463_1_1_1"/>
<dbReference type="InParanoid" id="Q9Z2F7"/>
<dbReference type="OMA" id="EAVEDHY"/>
<dbReference type="OrthoDB" id="5857140at2759"/>
<dbReference type="PhylomeDB" id="Q9Z2F7"/>
<dbReference type="TreeFam" id="TF315424"/>
<dbReference type="Reactome" id="R-MMU-6803204">
    <property type="pathway name" value="TP53 Regulates Transcription of Genes Involved in Cytochrome C Release"/>
</dbReference>
<dbReference type="BioGRID-ORCS" id="12177">
    <property type="hits" value="3 hits in 76 CRISPR screens"/>
</dbReference>
<dbReference type="ChiTaRS" id="Bnip3l">
    <property type="organism name" value="mouse"/>
</dbReference>
<dbReference type="PRO" id="PR:Q9Z2F7"/>
<dbReference type="Proteomes" id="UP000000589">
    <property type="component" value="Chromosome 14"/>
</dbReference>
<dbReference type="RNAct" id="Q9Z2F7">
    <property type="molecule type" value="protein"/>
</dbReference>
<dbReference type="Bgee" id="ENSMUSG00000022051">
    <property type="expression patterns" value="Expressed in blood and 286 other cell types or tissues"/>
</dbReference>
<dbReference type="ExpressionAtlas" id="Q9Z2F7">
    <property type="expression patterns" value="baseline and differential"/>
</dbReference>
<dbReference type="GO" id="GO:0005783">
    <property type="term" value="C:endoplasmic reticulum"/>
    <property type="evidence" value="ECO:0007669"/>
    <property type="project" value="UniProtKB-SubCell"/>
</dbReference>
<dbReference type="GO" id="GO:0005741">
    <property type="term" value="C:mitochondrial outer membrane"/>
    <property type="evidence" value="ECO:0000250"/>
    <property type="project" value="UniProtKB"/>
</dbReference>
<dbReference type="GO" id="GO:0005739">
    <property type="term" value="C:mitochondrion"/>
    <property type="evidence" value="ECO:0000314"/>
    <property type="project" value="MGI"/>
</dbReference>
<dbReference type="GO" id="GO:0005635">
    <property type="term" value="C:nuclear envelope"/>
    <property type="evidence" value="ECO:0007669"/>
    <property type="project" value="UniProtKB-SubCell"/>
</dbReference>
<dbReference type="GO" id="GO:0016607">
    <property type="term" value="C:nuclear speck"/>
    <property type="evidence" value="ECO:0007669"/>
    <property type="project" value="Ensembl"/>
</dbReference>
<dbReference type="GO" id="GO:0042802">
    <property type="term" value="F:identical protein binding"/>
    <property type="evidence" value="ECO:0000353"/>
    <property type="project" value="MGI"/>
</dbReference>
<dbReference type="GO" id="GO:0005521">
    <property type="term" value="F:lamin binding"/>
    <property type="evidence" value="ECO:0007669"/>
    <property type="project" value="Ensembl"/>
</dbReference>
<dbReference type="GO" id="GO:0042803">
    <property type="term" value="F:protein homodimerization activity"/>
    <property type="evidence" value="ECO:0007669"/>
    <property type="project" value="Ensembl"/>
</dbReference>
<dbReference type="GO" id="GO:0006915">
    <property type="term" value="P:apoptotic process"/>
    <property type="evidence" value="ECO:0007669"/>
    <property type="project" value="UniProtKB-KW"/>
</dbReference>
<dbReference type="GO" id="GO:0071456">
    <property type="term" value="P:cellular response to hypoxia"/>
    <property type="evidence" value="ECO:0000266"/>
    <property type="project" value="MGI"/>
</dbReference>
<dbReference type="GO" id="GO:0051607">
    <property type="term" value="P:defense response to virus"/>
    <property type="evidence" value="ECO:0000250"/>
    <property type="project" value="UniProtKB"/>
</dbReference>
<dbReference type="GO" id="GO:0035694">
    <property type="term" value="P:mitochondrial protein catabolic process"/>
    <property type="evidence" value="ECO:0000250"/>
    <property type="project" value="UniProtKB"/>
</dbReference>
<dbReference type="GO" id="GO:0043066">
    <property type="term" value="P:negative regulation of apoptotic process"/>
    <property type="evidence" value="ECO:0007669"/>
    <property type="project" value="Ensembl"/>
</dbReference>
<dbReference type="GO" id="GO:0010917">
    <property type="term" value="P:negative regulation of mitochondrial membrane potential"/>
    <property type="evidence" value="ECO:0007669"/>
    <property type="project" value="Ensembl"/>
</dbReference>
<dbReference type="GO" id="GO:0043069">
    <property type="term" value="P:negative regulation of programmed cell death"/>
    <property type="evidence" value="ECO:0000266"/>
    <property type="project" value="MGI"/>
</dbReference>
<dbReference type="GO" id="GO:0043065">
    <property type="term" value="P:positive regulation of apoptotic process"/>
    <property type="evidence" value="ECO:0000314"/>
    <property type="project" value="MGI"/>
</dbReference>
<dbReference type="GO" id="GO:0016239">
    <property type="term" value="P:positive regulation of macroautophagy"/>
    <property type="evidence" value="ECO:0000266"/>
    <property type="project" value="MGI"/>
</dbReference>
<dbReference type="GO" id="GO:0035794">
    <property type="term" value="P:positive regulation of mitochondrial membrane permeability"/>
    <property type="evidence" value="ECO:0007669"/>
    <property type="project" value="Ensembl"/>
</dbReference>
<dbReference type="GO" id="GO:1901524">
    <property type="term" value="P:regulation of mitophagy"/>
    <property type="evidence" value="ECO:0000316"/>
    <property type="project" value="ParkinsonsUK-UCL"/>
</dbReference>
<dbReference type="GO" id="GO:1903214">
    <property type="term" value="P:regulation of protein targeting to mitochondrion"/>
    <property type="evidence" value="ECO:0000316"/>
    <property type="project" value="ParkinsonsUK-UCL"/>
</dbReference>
<dbReference type="Gene3D" id="6.10.250.1020">
    <property type="match status" value="1"/>
</dbReference>
<dbReference type="InterPro" id="IPR010548">
    <property type="entry name" value="BNIP3"/>
</dbReference>
<dbReference type="PANTHER" id="PTHR15186:SF3">
    <property type="entry name" value="BCL2_ADENOVIRUS E1B 19 KDA PROTEIN-INTERACTING PROTEIN 3-LIKE"/>
    <property type="match status" value="1"/>
</dbReference>
<dbReference type="PANTHER" id="PTHR15186">
    <property type="entry name" value="RE48077P"/>
    <property type="match status" value="1"/>
</dbReference>
<dbReference type="Pfam" id="PF06553">
    <property type="entry name" value="BNIP3"/>
    <property type="match status" value="1"/>
</dbReference>
<protein>
    <recommendedName>
        <fullName>BCL2/adenovirus E1B 19 kDa protein-interacting protein 3-like</fullName>
    </recommendedName>
    <alternativeName>
        <fullName>NIP3-like protein X</fullName>
        <shortName>NIP3L</shortName>
    </alternativeName>
</protein>
<gene>
    <name type="primary">Bnip3l</name>
    <name type="synonym">Nix</name>
</gene>
<feature type="chain" id="PRO_0000064958" description="BCL2/adenovirus E1B 19 kDa protein-interacting protein 3-like">
    <location>
        <begin position="1"/>
        <end position="218"/>
    </location>
</feature>
<feature type="transmembrane region" description="Helical" evidence="3">
    <location>
        <begin position="187"/>
        <end position="207"/>
    </location>
</feature>
<feature type="region of interest" description="Disordered" evidence="4">
    <location>
        <begin position="1"/>
        <end position="66"/>
    </location>
</feature>
<feature type="region of interest" description="Disordered" evidence="4">
    <location>
        <begin position="78"/>
        <end position="100"/>
    </location>
</feature>
<feature type="short sequence motif" description="BH3">
    <location>
        <begin position="125"/>
        <end position="147"/>
    </location>
</feature>
<feature type="compositionally biased region" description="Pro residues" evidence="4">
    <location>
        <begin position="1"/>
        <end position="11"/>
    </location>
</feature>
<feature type="compositionally biased region" description="Low complexity" evidence="4">
    <location>
        <begin position="41"/>
        <end position="50"/>
    </location>
</feature>
<feature type="compositionally biased region" description="Low complexity" evidence="4">
    <location>
        <begin position="81"/>
        <end position="96"/>
    </location>
</feature>
<feature type="modified residue" description="Phosphoserine" evidence="6">
    <location>
        <position position="61"/>
    </location>
</feature>
<feature type="modified residue" description="Phosphoserine" evidence="6 7">
    <location>
        <position position="116"/>
    </location>
</feature>
<feature type="modified residue" description="Phosphoserine" evidence="7">
    <location>
        <position position="117"/>
    </location>
</feature>
<feature type="modified residue" description="Phosphoserine" evidence="7">
    <location>
        <position position="119"/>
    </location>
</feature>
<feature type="modified residue" description="Phosphoserine" evidence="2">
    <location>
        <position position="165"/>
    </location>
</feature>
<proteinExistence type="evidence at protein level"/>
<comment type="function">
    <text evidence="1">Induces apoptosis. Interacts with viral and cellular anti-apoptosis proteins. Can overcome the suppressors BCL-2 and BCL-XL, although high levels of BCL-XL expression will inhibit apoptosis. Inhibits apoptosis induced by BNIP3. Involved in mitochondrial quality control via its interaction with SPATA18/MIEAP: in response to mitochondrial damage, participates in mitochondrial protein catabolic process (also named MALM) leading to the degradation of damaged proteins inside mitochondria. The physical interaction of SPATA18/MIEAP, BNIP3 and BNIP3L/NIX at the mitochondrial outer membrane regulates the opening of a pore in the mitochondrial double membrane in order to mediate the translocation of lysosomal proteins from the cytoplasm to the mitochondrial matrix (By similarity). May function as a tumor suppressor (By similarity).</text>
</comment>
<comment type="subunit">
    <text evidence="2">Self-associates. Interacts with BNIP3 and STEAP3. Interacts (via BH3 domain) with SPATA18 (via coiled-coil domains). Interacts with PPTC7; this interaction promotes BNIP3L degradation.</text>
</comment>
<comment type="interaction">
    <interactant intactId="EBI-1774669">
        <id>Q9Z2F7</id>
    </interactant>
    <interactant intactId="EBI-957380">
        <id>Q69ZI1</id>
        <label>Sh3rf1</label>
    </interactant>
    <organismsDiffer>false</organismsDiffer>
    <experiments>4</experiments>
</comment>
<comment type="interaction">
    <interactant intactId="EBI-1774669">
        <id>Q9Z2F7</id>
    </interactant>
    <interactant intactId="EBI-712001">
        <id>O95166</id>
        <label>GABARAP</label>
    </interactant>
    <organismsDiffer>true</organismsDiffer>
    <experiments>2</experiments>
</comment>
<comment type="interaction">
    <interactant intactId="EBI-1774669">
        <id>Q9Z2F7</id>
    </interactant>
    <interactant intactId="EBI-746969">
        <id>Q9H0R8</id>
        <label>GABARAPL1</label>
    </interactant>
    <organismsDiffer>true</organismsDiffer>
    <experiments>4</experiments>
</comment>
<comment type="interaction">
    <interactant intactId="EBI-1774669">
        <id>Q9Z2F7</id>
    </interactant>
    <interactant intactId="EBI-720116">
        <id>P60520</id>
        <label>GABARAPL2</label>
    </interactant>
    <organismsDiffer>true</organismsDiffer>
    <experiments>2</experiments>
</comment>
<comment type="interaction">
    <interactant intactId="EBI-1774669">
        <id>Q9Z2F7</id>
    </interactant>
    <interactant intactId="EBI-720768">
        <id>Q9H492</id>
        <label>MAP1LC3A</label>
    </interactant>
    <organismsDiffer>true</organismsDiffer>
    <experiments>7</experiments>
</comment>
<comment type="interaction">
    <interactant intactId="EBI-1774669">
        <id>Q9Z2F7</id>
    </interactant>
    <interactant intactId="EBI-373144">
        <id>Q9GZQ8</id>
        <label>MAP1LC3B</label>
    </interactant>
    <organismsDiffer>true</organismsDiffer>
    <experiments>5</experiments>
</comment>
<comment type="subcellular location">
    <subcellularLocation>
        <location evidence="1">Nucleus envelope</location>
    </subcellularLocation>
    <subcellularLocation>
        <location evidence="1">Endoplasmic reticulum</location>
    </subcellularLocation>
    <subcellularLocation>
        <location evidence="1">Mitochondrion outer membrane</location>
    </subcellularLocation>
    <subcellularLocation>
        <location evidence="5">Membrane</location>
        <topology evidence="5">Single-pass membrane protein</topology>
    </subcellularLocation>
    <text evidence="1">Colocalizes with SPATA18 at the mitochondrion outer membrane.</text>
</comment>
<comment type="PTM">
    <text>Undergoes progressive proteolysis to an 11 kDa C-terminal fragment, which is blocked by the proteasome inhibitor lactacystin.</text>
</comment>
<comment type="similarity">
    <text evidence="5">Belongs to the NIP3 family.</text>
</comment>
<sequence length="218" mass="23766">MSHLVEPPPPLHNNNNNCEEGEQPLPPPAGLNSSWVELPMNSSNGNENGNGKNGGLEHVPSSSSIHNGDMEKILLDAQHESGQSSSRGSSHCDSPSPQEDGQIMFDVEMHTSRDHSSQSEEEVVEGEKEVEALKKSADWVSDWSSRPENIPPKEFHFRHPKRAASLSMRKSGAMKKGGIFSAEFLKVFIPSLFLSHVLALGLGIYIGKRLSTPSASTY</sequence>
<reference key="1">
    <citation type="journal article" date="1999" name="J. Biol. Chem.">
        <title>Nix and Nip3 form a subfamily of pro-apoptotic mitochondrial proteins.</title>
        <authorList>
            <person name="Chen G."/>
            <person name="Cizeau J."/>
            <person name="Vande Velde C."/>
            <person name="Park J.H."/>
            <person name="Bozek G."/>
            <person name="Bolton J."/>
            <person name="Shi L."/>
            <person name="Dubik D."/>
            <person name="Greenberg A."/>
        </authorList>
    </citation>
    <scope>NUCLEOTIDE SEQUENCE [MRNA]</scope>
    <source>
        <tissue>Embryo</tissue>
    </source>
</reference>
<reference key="2">
    <citation type="journal article" date="2005" name="Science">
        <title>The transcriptional landscape of the mammalian genome.</title>
        <authorList>
            <person name="Carninci P."/>
            <person name="Kasukawa T."/>
            <person name="Katayama S."/>
            <person name="Gough J."/>
            <person name="Frith M.C."/>
            <person name="Maeda N."/>
            <person name="Oyama R."/>
            <person name="Ravasi T."/>
            <person name="Lenhard B."/>
            <person name="Wells C."/>
            <person name="Kodzius R."/>
            <person name="Shimokawa K."/>
            <person name="Bajic V.B."/>
            <person name="Brenner S.E."/>
            <person name="Batalov S."/>
            <person name="Forrest A.R."/>
            <person name="Zavolan M."/>
            <person name="Davis M.J."/>
            <person name="Wilming L.G."/>
            <person name="Aidinis V."/>
            <person name="Allen J.E."/>
            <person name="Ambesi-Impiombato A."/>
            <person name="Apweiler R."/>
            <person name="Aturaliya R.N."/>
            <person name="Bailey T.L."/>
            <person name="Bansal M."/>
            <person name="Baxter L."/>
            <person name="Beisel K.W."/>
            <person name="Bersano T."/>
            <person name="Bono H."/>
            <person name="Chalk A.M."/>
            <person name="Chiu K.P."/>
            <person name="Choudhary V."/>
            <person name="Christoffels A."/>
            <person name="Clutterbuck D.R."/>
            <person name="Crowe M.L."/>
            <person name="Dalla E."/>
            <person name="Dalrymple B.P."/>
            <person name="de Bono B."/>
            <person name="Della Gatta G."/>
            <person name="di Bernardo D."/>
            <person name="Down T."/>
            <person name="Engstrom P."/>
            <person name="Fagiolini M."/>
            <person name="Faulkner G."/>
            <person name="Fletcher C.F."/>
            <person name="Fukushima T."/>
            <person name="Furuno M."/>
            <person name="Futaki S."/>
            <person name="Gariboldi M."/>
            <person name="Georgii-Hemming P."/>
            <person name="Gingeras T.R."/>
            <person name="Gojobori T."/>
            <person name="Green R.E."/>
            <person name="Gustincich S."/>
            <person name="Harbers M."/>
            <person name="Hayashi Y."/>
            <person name="Hensch T.K."/>
            <person name="Hirokawa N."/>
            <person name="Hill D."/>
            <person name="Huminiecki L."/>
            <person name="Iacono M."/>
            <person name="Ikeo K."/>
            <person name="Iwama A."/>
            <person name="Ishikawa T."/>
            <person name="Jakt M."/>
            <person name="Kanapin A."/>
            <person name="Katoh M."/>
            <person name="Kawasawa Y."/>
            <person name="Kelso J."/>
            <person name="Kitamura H."/>
            <person name="Kitano H."/>
            <person name="Kollias G."/>
            <person name="Krishnan S.P."/>
            <person name="Kruger A."/>
            <person name="Kummerfeld S.K."/>
            <person name="Kurochkin I.V."/>
            <person name="Lareau L.F."/>
            <person name="Lazarevic D."/>
            <person name="Lipovich L."/>
            <person name="Liu J."/>
            <person name="Liuni S."/>
            <person name="McWilliam S."/>
            <person name="Madan Babu M."/>
            <person name="Madera M."/>
            <person name="Marchionni L."/>
            <person name="Matsuda H."/>
            <person name="Matsuzawa S."/>
            <person name="Miki H."/>
            <person name="Mignone F."/>
            <person name="Miyake S."/>
            <person name="Morris K."/>
            <person name="Mottagui-Tabar S."/>
            <person name="Mulder N."/>
            <person name="Nakano N."/>
            <person name="Nakauchi H."/>
            <person name="Ng P."/>
            <person name="Nilsson R."/>
            <person name="Nishiguchi S."/>
            <person name="Nishikawa S."/>
            <person name="Nori F."/>
            <person name="Ohara O."/>
            <person name="Okazaki Y."/>
            <person name="Orlando V."/>
            <person name="Pang K.C."/>
            <person name="Pavan W.J."/>
            <person name="Pavesi G."/>
            <person name="Pesole G."/>
            <person name="Petrovsky N."/>
            <person name="Piazza S."/>
            <person name="Reed J."/>
            <person name="Reid J.F."/>
            <person name="Ring B.Z."/>
            <person name="Ringwald M."/>
            <person name="Rost B."/>
            <person name="Ruan Y."/>
            <person name="Salzberg S.L."/>
            <person name="Sandelin A."/>
            <person name="Schneider C."/>
            <person name="Schoenbach C."/>
            <person name="Sekiguchi K."/>
            <person name="Semple C.A."/>
            <person name="Seno S."/>
            <person name="Sessa L."/>
            <person name="Sheng Y."/>
            <person name="Shibata Y."/>
            <person name="Shimada H."/>
            <person name="Shimada K."/>
            <person name="Silva D."/>
            <person name="Sinclair B."/>
            <person name="Sperling S."/>
            <person name="Stupka E."/>
            <person name="Sugiura K."/>
            <person name="Sultana R."/>
            <person name="Takenaka Y."/>
            <person name="Taki K."/>
            <person name="Tammoja K."/>
            <person name="Tan S.L."/>
            <person name="Tang S."/>
            <person name="Taylor M.S."/>
            <person name="Tegner J."/>
            <person name="Teichmann S.A."/>
            <person name="Ueda H.R."/>
            <person name="van Nimwegen E."/>
            <person name="Verardo R."/>
            <person name="Wei C.L."/>
            <person name="Yagi K."/>
            <person name="Yamanishi H."/>
            <person name="Zabarovsky E."/>
            <person name="Zhu S."/>
            <person name="Zimmer A."/>
            <person name="Hide W."/>
            <person name="Bult C."/>
            <person name="Grimmond S.M."/>
            <person name="Teasdale R.D."/>
            <person name="Liu E.T."/>
            <person name="Brusic V."/>
            <person name="Quackenbush J."/>
            <person name="Wahlestedt C."/>
            <person name="Mattick J.S."/>
            <person name="Hume D.A."/>
            <person name="Kai C."/>
            <person name="Sasaki D."/>
            <person name="Tomaru Y."/>
            <person name="Fukuda S."/>
            <person name="Kanamori-Katayama M."/>
            <person name="Suzuki M."/>
            <person name="Aoki J."/>
            <person name="Arakawa T."/>
            <person name="Iida J."/>
            <person name="Imamura K."/>
            <person name="Itoh M."/>
            <person name="Kato T."/>
            <person name="Kawaji H."/>
            <person name="Kawagashira N."/>
            <person name="Kawashima T."/>
            <person name="Kojima M."/>
            <person name="Kondo S."/>
            <person name="Konno H."/>
            <person name="Nakano K."/>
            <person name="Ninomiya N."/>
            <person name="Nishio T."/>
            <person name="Okada M."/>
            <person name="Plessy C."/>
            <person name="Shibata K."/>
            <person name="Shiraki T."/>
            <person name="Suzuki S."/>
            <person name="Tagami M."/>
            <person name="Waki K."/>
            <person name="Watahiki A."/>
            <person name="Okamura-Oho Y."/>
            <person name="Suzuki H."/>
            <person name="Kawai J."/>
            <person name="Hayashizaki Y."/>
        </authorList>
    </citation>
    <scope>NUCLEOTIDE SEQUENCE [LARGE SCALE MRNA]</scope>
    <source>
        <strain>C57BL/6J</strain>
        <strain>NOD</strain>
        <tissue>Cecum</tissue>
        <tissue>Egg</tissue>
        <tissue>Hippocampus</tissue>
        <tissue>Lung</tissue>
        <tissue>Pancreas</tissue>
    </source>
</reference>
<reference key="3">
    <citation type="journal article" date="2004" name="Genome Res.">
        <title>The status, quality, and expansion of the NIH full-length cDNA project: the Mammalian Gene Collection (MGC).</title>
        <authorList>
            <consortium name="The MGC Project Team"/>
        </authorList>
    </citation>
    <scope>NUCLEOTIDE SEQUENCE [LARGE SCALE MRNA]</scope>
    <source>
        <tissue>Eye</tissue>
    </source>
</reference>
<reference key="4">
    <citation type="journal article" date="2007" name="Proc. Natl. Acad. Sci. U.S.A.">
        <title>Large-scale phosphorylation analysis of mouse liver.</title>
        <authorList>
            <person name="Villen J."/>
            <person name="Beausoleil S.A."/>
            <person name="Gerber S.A."/>
            <person name="Gygi S.P."/>
        </authorList>
    </citation>
    <scope>PHOSPHORYLATION [LARGE SCALE ANALYSIS] AT SER-61 AND SER-116</scope>
    <scope>IDENTIFICATION BY MASS SPECTROMETRY [LARGE SCALE ANALYSIS]</scope>
    <source>
        <tissue>Liver</tissue>
    </source>
</reference>
<reference key="5">
    <citation type="journal article" date="2010" name="Cell">
        <title>A tissue-specific atlas of mouse protein phosphorylation and expression.</title>
        <authorList>
            <person name="Huttlin E.L."/>
            <person name="Jedrychowski M.P."/>
            <person name="Elias J.E."/>
            <person name="Goswami T."/>
            <person name="Rad R."/>
            <person name="Beausoleil S.A."/>
            <person name="Villen J."/>
            <person name="Haas W."/>
            <person name="Sowa M.E."/>
            <person name="Gygi S.P."/>
        </authorList>
    </citation>
    <scope>PHOSPHORYLATION [LARGE SCALE ANALYSIS] AT SER-116; SER-117 AND SER-119</scope>
    <scope>IDENTIFICATION BY MASS SPECTROMETRY [LARGE SCALE ANALYSIS]</scope>
    <source>
        <tissue>Brain</tissue>
        <tissue>Brown adipose tissue</tissue>
        <tissue>Heart</tissue>
        <tissue>Kidney</tissue>
        <tissue>Liver</tissue>
        <tissue>Lung</tissue>
        <tissue>Spleen</tissue>
        <tissue>Testis</tissue>
    </source>
</reference>
<accession>Q9Z2F7</accession>
<accession>Q545J6</accession>
<evidence type="ECO:0000250" key="1"/>
<evidence type="ECO:0000250" key="2">
    <source>
        <dbReference type="UniProtKB" id="O60238"/>
    </source>
</evidence>
<evidence type="ECO:0000255" key="3"/>
<evidence type="ECO:0000256" key="4">
    <source>
        <dbReference type="SAM" id="MobiDB-lite"/>
    </source>
</evidence>
<evidence type="ECO:0000305" key="5"/>
<evidence type="ECO:0007744" key="6">
    <source>
    </source>
</evidence>
<evidence type="ECO:0007744" key="7">
    <source>
    </source>
</evidence>
<name>BNI3L_MOUSE</name>
<keyword id="KW-0053">Apoptosis</keyword>
<keyword id="KW-0256">Endoplasmic reticulum</keyword>
<keyword id="KW-0472">Membrane</keyword>
<keyword id="KW-0496">Mitochondrion</keyword>
<keyword id="KW-1000">Mitochondrion outer membrane</keyword>
<keyword id="KW-0539">Nucleus</keyword>
<keyword id="KW-0597">Phosphoprotein</keyword>
<keyword id="KW-1185">Reference proteome</keyword>
<keyword id="KW-0812">Transmembrane</keyword>
<keyword id="KW-1133">Transmembrane helix</keyword>